<sequence>MCSGPKQGLTLPASVDLEKETVITGRVVDGDGQAVGGAFVRLLDSSDEFTAEVVASATGDFRFFAAPGSWTLRALSAAGNGDAVVQPSGAGIHEVDVKIT</sequence>
<accession>P0CG98</accession>
<accession>Q6MX10</accession>
<accession>Q7ARR3</accession>
<accession>Q7D986</accession>
<keyword id="KW-1017">Isopeptide bond</keyword>
<keyword id="KW-1185">Reference proteome</keyword>
<keyword id="KW-0832">Ubl conjugation</keyword>
<organism>
    <name type="scientific">Mycobacterium tuberculosis (strain CDC 1551 / Oshkosh)</name>
    <dbReference type="NCBI Taxonomy" id="83331"/>
    <lineage>
        <taxon>Bacteria</taxon>
        <taxon>Bacillati</taxon>
        <taxon>Actinomycetota</taxon>
        <taxon>Actinomycetes</taxon>
        <taxon>Mycobacteriales</taxon>
        <taxon>Mycobacteriaceae</taxon>
        <taxon>Mycobacterium</taxon>
        <taxon>Mycobacterium tuberculosis complex</taxon>
    </lineage>
</organism>
<gene>
    <name type="ordered locus">MT3200</name>
</gene>
<protein>
    <recommendedName>
        <fullName>Uncharacterized protein MT3200</fullName>
    </recommendedName>
</protein>
<name>Y3200_MYCTO</name>
<evidence type="ECO:0000250" key="1"/>
<proteinExistence type="inferred from homology"/>
<reference key="1">
    <citation type="journal article" date="2002" name="J. Bacteriol.">
        <title>Whole-genome comparison of Mycobacterium tuberculosis clinical and laboratory strains.</title>
        <authorList>
            <person name="Fleischmann R.D."/>
            <person name="Alland D."/>
            <person name="Eisen J.A."/>
            <person name="Carpenter L."/>
            <person name="White O."/>
            <person name="Peterson J.D."/>
            <person name="DeBoy R.T."/>
            <person name="Dodson R.J."/>
            <person name="Gwinn M.L."/>
            <person name="Haft D.H."/>
            <person name="Hickey E.K."/>
            <person name="Kolonay J.F."/>
            <person name="Nelson W.C."/>
            <person name="Umayam L.A."/>
            <person name="Ermolaeva M.D."/>
            <person name="Salzberg S.L."/>
            <person name="Delcher A."/>
            <person name="Utterback T.R."/>
            <person name="Weidman J.F."/>
            <person name="Khouri H.M."/>
            <person name="Gill J."/>
            <person name="Mikula A."/>
            <person name="Bishai W."/>
            <person name="Jacobs W.R. Jr."/>
            <person name="Venter J.C."/>
            <person name="Fraser C.M."/>
        </authorList>
    </citation>
    <scope>NUCLEOTIDE SEQUENCE [LARGE SCALE GENOMIC DNA]</scope>
    <source>
        <strain>CDC 1551 / Oshkosh</strain>
    </source>
</reference>
<feature type="chain" id="PRO_0000396085" description="Uncharacterized protein MT3200">
    <location>
        <begin position="1"/>
        <end position="100"/>
    </location>
</feature>
<feature type="cross-link" description="Isoglutamyl lysine isopeptide (Lys-Gln) (interchain with Q-Cter in protein Pup)" evidence="1">
    <location>
        <position position="98"/>
    </location>
</feature>
<dbReference type="EMBL" id="AE000516">
    <property type="protein sequence ID" value="AAK47540.1"/>
    <property type="molecule type" value="Genomic_DNA"/>
</dbReference>
<dbReference type="RefSeq" id="WP_003404278.1">
    <property type="nucleotide sequence ID" value="NZ_KK341227.1"/>
</dbReference>
<dbReference type="SMR" id="P0CG98"/>
<dbReference type="KEGG" id="mtc:MT3200"/>
<dbReference type="PATRIC" id="fig|83331.31.peg.3450"/>
<dbReference type="HOGENOM" id="CLU_154652_1_0_11"/>
<dbReference type="Proteomes" id="UP000001020">
    <property type="component" value="Chromosome"/>
</dbReference>
<dbReference type="FunFam" id="2.60.40.1120:FF:000013">
    <property type="entry name" value="DUF1416 domain-containing protein"/>
    <property type="match status" value="1"/>
</dbReference>
<dbReference type="Gene3D" id="2.60.40.1120">
    <property type="entry name" value="Carboxypeptidase-like, regulatory domain"/>
    <property type="match status" value="1"/>
</dbReference>
<dbReference type="InterPro" id="IPR008969">
    <property type="entry name" value="CarboxyPept-like_regulatory"/>
</dbReference>
<dbReference type="InterPro" id="IPR010814">
    <property type="entry name" value="DUF1416"/>
</dbReference>
<dbReference type="Pfam" id="PF07210">
    <property type="entry name" value="DUF1416"/>
    <property type="match status" value="1"/>
</dbReference>
<dbReference type="SUPFAM" id="SSF49464">
    <property type="entry name" value="Carboxypeptidase regulatory domain-like"/>
    <property type="match status" value="1"/>
</dbReference>